<organism>
    <name type="scientific">Xenopus tropicalis</name>
    <name type="common">Western clawed frog</name>
    <name type="synonym">Silurana tropicalis</name>
    <dbReference type="NCBI Taxonomy" id="8364"/>
    <lineage>
        <taxon>Eukaryota</taxon>
        <taxon>Metazoa</taxon>
        <taxon>Chordata</taxon>
        <taxon>Craniata</taxon>
        <taxon>Vertebrata</taxon>
        <taxon>Euteleostomi</taxon>
        <taxon>Amphibia</taxon>
        <taxon>Batrachia</taxon>
        <taxon>Anura</taxon>
        <taxon>Pipoidea</taxon>
        <taxon>Pipidae</taxon>
        <taxon>Xenopodinae</taxon>
        <taxon>Xenopus</taxon>
        <taxon>Silurana</taxon>
    </lineage>
</organism>
<reference key="1">
    <citation type="submission" date="2005-03" db="EMBL/GenBank/DDBJ databases">
        <authorList>
            <consortium name="NIH - Xenopus Gene Collection (XGC) project"/>
        </authorList>
    </citation>
    <scope>NUCLEOTIDE SEQUENCE [LARGE SCALE MRNA]</scope>
</reference>
<keyword id="KW-0272">Extracellular matrix</keyword>
<keyword id="KW-0560">Oxidoreductase</keyword>
<keyword id="KW-1185">Reference proteome</keyword>
<keyword id="KW-0964">Secreted</keyword>
<keyword id="KW-0732">Signal</keyword>
<accession>Q5BKK6</accession>
<dbReference type="EC" id="1.-.-.-"/>
<dbReference type="EMBL" id="BC091040">
    <property type="protein sequence ID" value="AAH91040.1"/>
    <property type="molecule type" value="mRNA"/>
</dbReference>
<dbReference type="RefSeq" id="NP_001025591.1">
    <property type="nucleotide sequence ID" value="NM_001030420.1"/>
</dbReference>
<dbReference type="RefSeq" id="XP_012816668.1">
    <property type="nucleotide sequence ID" value="XM_012961214.2"/>
</dbReference>
<dbReference type="RefSeq" id="XP_012816669.1">
    <property type="nucleotide sequence ID" value="XM_012961215.2"/>
</dbReference>
<dbReference type="RefSeq" id="XP_012816670.1">
    <property type="nucleotide sequence ID" value="XM_012961216.2"/>
</dbReference>
<dbReference type="SMR" id="Q5BKK6"/>
<dbReference type="FunCoup" id="Q5BKK6">
    <property type="interactions" value="82"/>
</dbReference>
<dbReference type="STRING" id="8364.ENSXETP00000032984"/>
<dbReference type="PaxDb" id="8364-ENSXETP00000034069"/>
<dbReference type="GeneID" id="594979"/>
<dbReference type="KEGG" id="xtr:594979"/>
<dbReference type="AGR" id="Xenbase:XB-GENE-5740207"/>
<dbReference type="CTD" id="81577"/>
<dbReference type="Xenbase" id="XB-GENE-5740207">
    <property type="gene designation" value="gfod2"/>
</dbReference>
<dbReference type="eggNOG" id="KOG2742">
    <property type="taxonomic scope" value="Eukaryota"/>
</dbReference>
<dbReference type="HOGENOM" id="CLU_023194_8_0_1"/>
<dbReference type="InParanoid" id="Q5BKK6"/>
<dbReference type="OrthoDB" id="446809at2759"/>
<dbReference type="PhylomeDB" id="Q5BKK6"/>
<dbReference type="TreeFam" id="TF323246"/>
<dbReference type="Proteomes" id="UP000008143">
    <property type="component" value="Chromosome 4"/>
</dbReference>
<dbReference type="Bgee" id="ENSXETG00000015621">
    <property type="expression patterns" value="Expressed in egg cell and 12 other cell types or tissues"/>
</dbReference>
<dbReference type="GO" id="GO:0005576">
    <property type="term" value="C:extracellular region"/>
    <property type="evidence" value="ECO:0007669"/>
    <property type="project" value="UniProtKB-KW"/>
</dbReference>
<dbReference type="GO" id="GO:0000166">
    <property type="term" value="F:nucleotide binding"/>
    <property type="evidence" value="ECO:0007669"/>
    <property type="project" value="InterPro"/>
</dbReference>
<dbReference type="GO" id="GO:0016491">
    <property type="term" value="F:oxidoreductase activity"/>
    <property type="evidence" value="ECO:0007669"/>
    <property type="project" value="UniProtKB-KW"/>
</dbReference>
<dbReference type="FunFam" id="3.40.50.720:FF:000233">
    <property type="entry name" value="Glucose-fructose oxidoreductase domain-containing protein 2"/>
    <property type="match status" value="1"/>
</dbReference>
<dbReference type="Gene3D" id="3.30.360.10">
    <property type="entry name" value="Dihydrodipicolinate Reductase, domain 2"/>
    <property type="match status" value="1"/>
</dbReference>
<dbReference type="Gene3D" id="3.40.50.720">
    <property type="entry name" value="NAD(P)-binding Rossmann-like Domain"/>
    <property type="match status" value="1"/>
</dbReference>
<dbReference type="InterPro" id="IPR000683">
    <property type="entry name" value="Gfo/Idh/MocA-like_OxRdtase_N"/>
</dbReference>
<dbReference type="InterPro" id="IPR050463">
    <property type="entry name" value="Gfo/Idh/MocA_oxidrdct_glycsds"/>
</dbReference>
<dbReference type="InterPro" id="IPR055170">
    <property type="entry name" value="GFO_IDH_MocA-like_dom"/>
</dbReference>
<dbReference type="InterPro" id="IPR036291">
    <property type="entry name" value="NAD(P)-bd_dom_sf"/>
</dbReference>
<dbReference type="PANTHER" id="PTHR43818">
    <property type="entry name" value="BCDNA.GH03377"/>
    <property type="match status" value="1"/>
</dbReference>
<dbReference type="PANTHER" id="PTHR43818:SF8">
    <property type="entry name" value="GLUCOSE-FRUCTOSE OXIDOREDUCTASE DOMAIN-CONTAINING PROTEIN 2"/>
    <property type="match status" value="1"/>
</dbReference>
<dbReference type="Pfam" id="PF01408">
    <property type="entry name" value="GFO_IDH_MocA"/>
    <property type="match status" value="1"/>
</dbReference>
<dbReference type="Pfam" id="PF22725">
    <property type="entry name" value="GFO_IDH_MocA_C3"/>
    <property type="match status" value="1"/>
</dbReference>
<dbReference type="SUPFAM" id="SSF55347">
    <property type="entry name" value="Glyceraldehyde-3-phosphate dehydrogenase-like, C-terminal domain"/>
    <property type="match status" value="1"/>
</dbReference>
<dbReference type="SUPFAM" id="SSF51735">
    <property type="entry name" value="NAD(P)-binding Rossmann-fold domains"/>
    <property type="match status" value="1"/>
</dbReference>
<proteinExistence type="evidence at transcript level"/>
<evidence type="ECO:0000250" key="1"/>
<evidence type="ECO:0000255" key="2"/>
<evidence type="ECO:0000256" key="3">
    <source>
        <dbReference type="SAM" id="MobiDB-lite"/>
    </source>
</evidence>
<evidence type="ECO:0000305" key="4"/>
<protein>
    <recommendedName>
        <fullName>Glucose-fructose oxidoreductase domain-containing protein 2</fullName>
        <ecNumber>1.-.-.-</ecNumber>
    </recommendedName>
</protein>
<name>GFOD2_XENTR</name>
<feature type="signal peptide" evidence="2">
    <location>
        <begin position="1"/>
        <end position="25"/>
    </location>
</feature>
<feature type="chain" id="PRO_0000282975" description="Glucose-fructose oxidoreductase domain-containing protein 2">
    <location>
        <begin position="26"/>
        <end position="384"/>
    </location>
</feature>
<feature type="region of interest" description="Disordered" evidence="3">
    <location>
        <begin position="358"/>
        <end position="384"/>
    </location>
</feature>
<feature type="compositionally biased region" description="Polar residues" evidence="3">
    <location>
        <begin position="372"/>
        <end position="384"/>
    </location>
</feature>
<comment type="function">
    <text evidence="1">Promotes matrix assembly.</text>
</comment>
<comment type="subcellular location">
    <subcellularLocation>
        <location evidence="1">Secreted</location>
        <location evidence="1">Extracellular space</location>
        <location evidence="1">Extracellular matrix</location>
    </subcellularLocation>
</comment>
<comment type="similarity">
    <text evidence="4">Belongs to the Gfo/Idh/MocA family.</text>
</comment>
<sequence>MKTLPGIGVFGTGNTARVLISLLRADGFSIEALWGKTDEEAKELAEEMGIPFYTCHTDDVLLHQEVDLVCISIPPPLTRQIAVKALGIGKNVICEKAASSIDAFTMVKAARYYPKLMSLVGNALRFLPAFDRMRQLILEQNYVGEIRICDVRVYGGSLLSSNYSWICDDLMGGGGLHTLGTYLVDLLTHLTNKRAEKVHGFLKTFVKQNEAISGIRYVTSDDFCFFQMQMTGGACSTVTLNFNMPGTFVHEVMVVGSAGRLVVRGTELFGQKNSASEEKLLLSDPLTREIADISDFEKVPPPYLMGIAHMVKALRQSFQDQEDRRTWDQKPLSVAATFEDGLYMQRVVDAIKRSNRSGEWESVELTNDETDSNQNLSEVIQHNL</sequence>
<gene>
    <name type="primary">gfod2</name>
</gene>